<comment type="function">
    <text evidence="1">Nucleotide-binding protein.</text>
</comment>
<comment type="similarity">
    <text evidence="1">Belongs to the YajQ family.</text>
</comment>
<name>Y286_ACIC1</name>
<dbReference type="EMBL" id="CP000481">
    <property type="protein sequence ID" value="ABK52060.1"/>
    <property type="molecule type" value="Genomic_DNA"/>
</dbReference>
<dbReference type="RefSeq" id="WP_011719123.1">
    <property type="nucleotide sequence ID" value="NC_008578.1"/>
</dbReference>
<dbReference type="SMR" id="A0LRK0"/>
<dbReference type="FunCoup" id="A0LRK0">
    <property type="interactions" value="3"/>
</dbReference>
<dbReference type="STRING" id="351607.Acel_0286"/>
<dbReference type="KEGG" id="ace:Acel_0286"/>
<dbReference type="eggNOG" id="COG1666">
    <property type="taxonomic scope" value="Bacteria"/>
</dbReference>
<dbReference type="HOGENOM" id="CLU_099839_0_0_11"/>
<dbReference type="InParanoid" id="A0LRK0"/>
<dbReference type="OrthoDB" id="9801447at2"/>
<dbReference type="Proteomes" id="UP000008221">
    <property type="component" value="Chromosome"/>
</dbReference>
<dbReference type="GO" id="GO:0005829">
    <property type="term" value="C:cytosol"/>
    <property type="evidence" value="ECO:0007669"/>
    <property type="project" value="TreeGrafter"/>
</dbReference>
<dbReference type="GO" id="GO:0000166">
    <property type="term" value="F:nucleotide binding"/>
    <property type="evidence" value="ECO:0007669"/>
    <property type="project" value="TreeGrafter"/>
</dbReference>
<dbReference type="CDD" id="cd11740">
    <property type="entry name" value="YajQ_like"/>
    <property type="match status" value="1"/>
</dbReference>
<dbReference type="FunFam" id="3.30.70.860:FF:000004">
    <property type="entry name" value="UPF0234 protein AWC22_11905"/>
    <property type="match status" value="1"/>
</dbReference>
<dbReference type="Gene3D" id="3.30.70.860">
    <property type="match status" value="1"/>
</dbReference>
<dbReference type="Gene3D" id="3.30.70.990">
    <property type="entry name" value="YajQ-like, domain 2"/>
    <property type="match status" value="1"/>
</dbReference>
<dbReference type="HAMAP" id="MF_00632">
    <property type="entry name" value="YajQ"/>
    <property type="match status" value="1"/>
</dbReference>
<dbReference type="InterPro" id="IPR007551">
    <property type="entry name" value="DUF520"/>
</dbReference>
<dbReference type="InterPro" id="IPR035571">
    <property type="entry name" value="UPF0234-like_C"/>
</dbReference>
<dbReference type="InterPro" id="IPR035570">
    <property type="entry name" value="UPF0234_N"/>
</dbReference>
<dbReference type="InterPro" id="IPR036183">
    <property type="entry name" value="YajQ-like_sf"/>
</dbReference>
<dbReference type="NCBIfam" id="NF003819">
    <property type="entry name" value="PRK05412.1"/>
    <property type="match status" value="1"/>
</dbReference>
<dbReference type="PANTHER" id="PTHR30476">
    <property type="entry name" value="UPF0234 PROTEIN YAJQ"/>
    <property type="match status" value="1"/>
</dbReference>
<dbReference type="PANTHER" id="PTHR30476:SF0">
    <property type="entry name" value="UPF0234 PROTEIN YAJQ"/>
    <property type="match status" value="1"/>
</dbReference>
<dbReference type="Pfam" id="PF04461">
    <property type="entry name" value="DUF520"/>
    <property type="match status" value="1"/>
</dbReference>
<dbReference type="SUPFAM" id="SSF89963">
    <property type="entry name" value="YajQ-like"/>
    <property type="match status" value="2"/>
</dbReference>
<organism>
    <name type="scientific">Acidothermus cellulolyticus (strain ATCC 43068 / DSM 8971 / 11B)</name>
    <dbReference type="NCBI Taxonomy" id="351607"/>
    <lineage>
        <taxon>Bacteria</taxon>
        <taxon>Bacillati</taxon>
        <taxon>Actinomycetota</taxon>
        <taxon>Actinomycetes</taxon>
        <taxon>Acidothermales</taxon>
        <taxon>Acidothermaceae</taxon>
        <taxon>Acidothermus</taxon>
    </lineage>
</organism>
<feature type="chain" id="PRO_1000147277" description="Nucleotide-binding protein Acel_0286">
    <location>
        <begin position="1"/>
        <end position="163"/>
    </location>
</feature>
<evidence type="ECO:0000255" key="1">
    <source>
        <dbReference type="HAMAP-Rule" id="MF_00632"/>
    </source>
</evidence>
<accession>A0LRK0</accession>
<protein>
    <recommendedName>
        <fullName evidence="1">Nucleotide-binding protein Acel_0286</fullName>
    </recommendedName>
</protein>
<gene>
    <name type="ordered locus">Acel_0286</name>
</gene>
<proteinExistence type="inferred from homology"/>
<reference key="1">
    <citation type="journal article" date="2009" name="Genome Res.">
        <title>Complete genome of the cellulolytic thermophile Acidothermus cellulolyticus 11B provides insights into its ecophysiological and evolutionary adaptations.</title>
        <authorList>
            <person name="Barabote R.D."/>
            <person name="Xie G."/>
            <person name="Leu D.H."/>
            <person name="Normand P."/>
            <person name="Necsulea A."/>
            <person name="Daubin V."/>
            <person name="Medigue C."/>
            <person name="Adney W.S."/>
            <person name="Xu X.C."/>
            <person name="Lapidus A."/>
            <person name="Parales R.E."/>
            <person name="Detter C."/>
            <person name="Pujic P."/>
            <person name="Bruce D."/>
            <person name="Lavire C."/>
            <person name="Challacombe J.F."/>
            <person name="Brettin T.S."/>
            <person name="Berry A.M."/>
        </authorList>
    </citation>
    <scope>NUCLEOTIDE SEQUENCE [LARGE SCALE GENOMIC DNA]</scope>
    <source>
        <strain>ATCC 43068 / DSM 8971 / 11B</strain>
    </source>
</reference>
<keyword id="KW-0547">Nucleotide-binding</keyword>
<keyword id="KW-1185">Reference proteome</keyword>
<sequence length="163" mass="18179">MPESSFDVVSKADRQEVDNALNQTAKKIAQRFDFKDTGAQIRWSGDLGVEIRANSADRTLAVLDVFKEMLIKRGVSLKFLDVGEPKPSGKEFRLAVTIKQGIPTETARRLITLIKDEGPRGVHAQIQGDQLRVSSKKKDDLQAVIALLKAKDLDIALQFTNYR</sequence>